<dbReference type="EC" id="4.2.1.-" evidence="1"/>
<dbReference type="EMBL" id="BA000028">
    <property type="protein sequence ID" value="BAC15338.1"/>
    <property type="molecule type" value="Genomic_DNA"/>
</dbReference>
<dbReference type="RefSeq" id="WP_011067780.1">
    <property type="nucleotide sequence ID" value="NC_004193.1"/>
</dbReference>
<dbReference type="SMR" id="Q8EL49"/>
<dbReference type="STRING" id="221109.gene:10735634"/>
<dbReference type="KEGG" id="oih:OB3382"/>
<dbReference type="eggNOG" id="COG4336">
    <property type="taxonomic scope" value="Bacteria"/>
</dbReference>
<dbReference type="HOGENOM" id="CLU_059759_0_0_9"/>
<dbReference type="OrthoDB" id="149585at2"/>
<dbReference type="PhylomeDB" id="Q8EL49"/>
<dbReference type="Proteomes" id="UP000000822">
    <property type="component" value="Chromosome"/>
</dbReference>
<dbReference type="GO" id="GO:0016829">
    <property type="term" value="F:lyase activity"/>
    <property type="evidence" value="ECO:0007669"/>
    <property type="project" value="UniProtKB-KW"/>
</dbReference>
<dbReference type="FunFam" id="3.30.2040.10:FF:000001">
    <property type="entry name" value="D-glutamate cyclase, mitochondrial"/>
    <property type="match status" value="1"/>
</dbReference>
<dbReference type="Gene3D" id="3.40.1640.10">
    <property type="entry name" value="PSTPO5379-like"/>
    <property type="match status" value="1"/>
</dbReference>
<dbReference type="Gene3D" id="3.30.2040.10">
    <property type="entry name" value="PSTPO5379-like domain"/>
    <property type="match status" value="1"/>
</dbReference>
<dbReference type="HAMAP" id="MF_01830">
    <property type="entry name" value="Hydro_lyase"/>
    <property type="match status" value="1"/>
</dbReference>
<dbReference type="InterPro" id="IPR009906">
    <property type="entry name" value="D-Glu_cyclase"/>
</dbReference>
<dbReference type="InterPro" id="IPR038021">
    <property type="entry name" value="Putative_hydro-lyase"/>
</dbReference>
<dbReference type="InterPro" id="IPR016938">
    <property type="entry name" value="UPF0317"/>
</dbReference>
<dbReference type="NCBIfam" id="NF003969">
    <property type="entry name" value="PRK05463.1"/>
    <property type="match status" value="1"/>
</dbReference>
<dbReference type="PANTHER" id="PTHR32022">
    <property type="entry name" value="D-GLUTAMATE CYCLASE, MITOCHONDRIAL"/>
    <property type="match status" value="1"/>
</dbReference>
<dbReference type="PANTHER" id="PTHR32022:SF10">
    <property type="entry name" value="D-GLUTAMATE CYCLASE, MITOCHONDRIAL"/>
    <property type="match status" value="1"/>
</dbReference>
<dbReference type="Pfam" id="PF07286">
    <property type="entry name" value="D-Glu_cyclase"/>
    <property type="match status" value="1"/>
</dbReference>
<dbReference type="PIRSF" id="PIRSF029755">
    <property type="entry name" value="UCP029755"/>
    <property type="match status" value="1"/>
</dbReference>
<dbReference type="SUPFAM" id="SSF160920">
    <property type="entry name" value="PSTPO5379-like"/>
    <property type="match status" value="1"/>
</dbReference>
<keyword id="KW-0456">Lyase</keyword>
<keyword id="KW-1185">Reference proteome</keyword>
<gene>
    <name type="ordered locus">OB3382</name>
</gene>
<organism>
    <name type="scientific">Oceanobacillus iheyensis (strain DSM 14371 / CIP 107618 / JCM 11309 / KCTC 3954 / HTE831)</name>
    <dbReference type="NCBI Taxonomy" id="221109"/>
    <lineage>
        <taxon>Bacteria</taxon>
        <taxon>Bacillati</taxon>
        <taxon>Bacillota</taxon>
        <taxon>Bacilli</taxon>
        <taxon>Bacillales</taxon>
        <taxon>Bacillaceae</taxon>
        <taxon>Oceanobacillus</taxon>
    </lineage>
</organism>
<proteinExistence type="inferred from homology"/>
<protein>
    <recommendedName>
        <fullName evidence="1">Putative hydro-lyase OB3382</fullName>
        <ecNumber evidence="1">4.2.1.-</ecNumber>
    </recommendedName>
</protein>
<name>Y3382_OCEIH</name>
<reference key="1">
    <citation type="journal article" date="2002" name="Nucleic Acids Res.">
        <title>Genome sequence of Oceanobacillus iheyensis isolated from the Iheya Ridge and its unexpected adaptive capabilities to extreme environments.</title>
        <authorList>
            <person name="Takami H."/>
            <person name="Takaki Y."/>
            <person name="Uchiyama I."/>
        </authorList>
    </citation>
    <scope>NUCLEOTIDE SEQUENCE [LARGE SCALE GENOMIC DNA]</scope>
    <source>
        <strain>DSM 14371 / CIP 107618 / JCM 11309 / KCTC 3954 / HTE831</strain>
    </source>
</reference>
<comment type="similarity">
    <text evidence="1">Belongs to the D-glutamate cyclase family.</text>
</comment>
<feature type="chain" id="PRO_0000217168" description="Putative hydro-lyase OB3382">
    <location>
        <begin position="1"/>
        <end position="252"/>
    </location>
</feature>
<sequence length="252" mass="28809">MHPKQQRESFRSKQYTGTTSGMCDNYLQANMIILPKEYAFEFLLFCQRNPKSCPIIDVLEEGVTTPQIADADIRTDLPKYRIYRNGQLDKEVTDIKDKWRADFVTFLIGCSFTFEKALIENGIRLLHQEQERVVPMYKTNIPCEKAGRFEGNMVVSMRALEPEEIDKAVKITERFETSHGSPVHIGNPEEIGIKDIDNPDYGESISFDKKKRTPVFWACGVTPQNVGLNVKPPIMIAHAPGHMLITDQLEEK</sequence>
<accession>Q8EL49</accession>
<evidence type="ECO:0000255" key="1">
    <source>
        <dbReference type="HAMAP-Rule" id="MF_01830"/>
    </source>
</evidence>